<accession>Q8SQC1</accession>
<organism>
    <name type="scientific">Sus scrofa</name>
    <name type="common">Pig</name>
    <dbReference type="NCBI Taxonomy" id="9823"/>
    <lineage>
        <taxon>Eukaryota</taxon>
        <taxon>Metazoa</taxon>
        <taxon>Chordata</taxon>
        <taxon>Craniata</taxon>
        <taxon>Vertebrata</taxon>
        <taxon>Euteleostomi</taxon>
        <taxon>Mammalia</taxon>
        <taxon>Eutheria</taxon>
        <taxon>Laurasiatheria</taxon>
        <taxon>Artiodactyla</taxon>
        <taxon>Suina</taxon>
        <taxon>Suidae</taxon>
        <taxon>Sus</taxon>
    </lineage>
</organism>
<evidence type="ECO:0000250" key="1"/>
<evidence type="ECO:0000250" key="2">
    <source>
        <dbReference type="UniProtKB" id="Q61009"/>
    </source>
</evidence>
<evidence type="ECO:0000250" key="3">
    <source>
        <dbReference type="UniProtKB" id="Q8WTV0"/>
    </source>
</evidence>
<evidence type="ECO:0000255" key="4"/>
<evidence type="ECO:0000305" key="5"/>
<name>SCRB1_PIG</name>
<protein>
    <recommendedName>
        <fullName>Scavenger receptor class B member 1</fullName>
        <shortName>SRB1</shortName>
    </recommendedName>
    <alternativeName>
        <fullName>High density lipoprotein receptor SR-BI</fullName>
    </alternativeName>
    <alternativeName>
        <fullName>SR-BI</fullName>
    </alternativeName>
</protein>
<proteinExistence type="evidence at transcript level"/>
<keyword id="KW-1003">Cell membrane</keyword>
<keyword id="KW-1015">Disulfide bond</keyword>
<keyword id="KW-0325">Glycoprotein</keyword>
<keyword id="KW-0472">Membrane</keyword>
<keyword id="KW-0675">Receptor</keyword>
<keyword id="KW-1185">Reference proteome</keyword>
<keyword id="KW-0812">Transmembrane</keyword>
<keyword id="KW-1133">Transmembrane helix</keyword>
<dbReference type="EMBL" id="AF467889">
    <property type="protein sequence ID" value="AAL75567.1"/>
    <property type="molecule type" value="mRNA"/>
</dbReference>
<dbReference type="RefSeq" id="NP_999132.1">
    <property type="nucleotide sequence ID" value="NM_213967.1"/>
</dbReference>
<dbReference type="SMR" id="Q8SQC1"/>
<dbReference type="FunCoup" id="Q8SQC1">
    <property type="interactions" value="205"/>
</dbReference>
<dbReference type="STRING" id="9823.ENSSSCP00000010421"/>
<dbReference type="GlyCosmos" id="Q8SQC1">
    <property type="glycosylation" value="8 sites, No reported glycans"/>
</dbReference>
<dbReference type="GlyGen" id="Q8SQC1">
    <property type="glycosylation" value="8 sites"/>
</dbReference>
<dbReference type="PaxDb" id="9823-ENSSSCP00000010421"/>
<dbReference type="PeptideAtlas" id="Q8SQC1"/>
<dbReference type="Ensembl" id="ENSSSCT00015105967.1">
    <property type="protein sequence ID" value="ENSSSCP00015044464.1"/>
    <property type="gene ID" value="ENSSSCG00015078283.1"/>
</dbReference>
<dbReference type="Ensembl" id="ENSSSCT00025017217.1">
    <property type="protein sequence ID" value="ENSSSCP00025006884.1"/>
    <property type="gene ID" value="ENSSSCG00025012867.1"/>
</dbReference>
<dbReference type="Ensembl" id="ENSSSCT00030003725.1">
    <property type="protein sequence ID" value="ENSSSCP00030001466.1"/>
    <property type="gene ID" value="ENSSSCG00030002857.1"/>
</dbReference>
<dbReference type="Ensembl" id="ENSSSCT00050075288.1">
    <property type="protein sequence ID" value="ENSSSCP00050032476.1"/>
    <property type="gene ID" value="ENSSSCG00050055165.1"/>
</dbReference>
<dbReference type="Ensembl" id="ENSSSCT00055002768.1">
    <property type="protein sequence ID" value="ENSSSCP00055002087.1"/>
    <property type="gene ID" value="ENSSSCG00055001468.1"/>
</dbReference>
<dbReference type="Ensembl" id="ENSSSCT00070036281.1">
    <property type="protein sequence ID" value="ENSSSCP00070030335.1"/>
    <property type="gene ID" value="ENSSSCG00070018349.1"/>
</dbReference>
<dbReference type="Ensembl" id="ENSSSCT00090046431">
    <property type="protein sequence ID" value="ENSSSCP00090028760"/>
    <property type="gene ID" value="ENSSSCG00090026270"/>
</dbReference>
<dbReference type="Ensembl" id="ENSSSCT00105019241">
    <property type="protein sequence ID" value="ENSSSCP00105013639"/>
    <property type="gene ID" value="ENSSSCG00105009685"/>
</dbReference>
<dbReference type="Ensembl" id="ENSSSCT00110068530">
    <property type="protein sequence ID" value="ENSSSCP00110048211"/>
    <property type="gene ID" value="ENSSSCG00110036032"/>
</dbReference>
<dbReference type="Ensembl" id="ENSSSCT00115006777">
    <property type="protein sequence ID" value="ENSSSCP00115006356"/>
    <property type="gene ID" value="ENSSSCG00115003959"/>
</dbReference>
<dbReference type="Ensembl" id="ENSSSCT00130047319">
    <property type="protein sequence ID" value="ENSSSCP00130033235"/>
    <property type="gene ID" value="ENSSSCG00130024385"/>
</dbReference>
<dbReference type="GeneID" id="397018"/>
<dbReference type="KEGG" id="ssc:397018"/>
<dbReference type="CTD" id="949"/>
<dbReference type="eggNOG" id="KOG3776">
    <property type="taxonomic scope" value="Eukaryota"/>
</dbReference>
<dbReference type="InParanoid" id="Q8SQC1"/>
<dbReference type="OrthoDB" id="514335at2759"/>
<dbReference type="Reactome" id="R-SSC-3000471">
    <property type="pathway name" value="Scavenging by Class B Receptors"/>
</dbReference>
<dbReference type="Reactome" id="R-SSC-8964011">
    <property type="pathway name" value="HDL clearance"/>
</dbReference>
<dbReference type="ChiTaRS" id="SCARB1">
    <property type="organism name" value="pig"/>
</dbReference>
<dbReference type="Proteomes" id="UP000008227">
    <property type="component" value="Unplaced"/>
</dbReference>
<dbReference type="Proteomes" id="UP000314985">
    <property type="component" value="Chromosome 14"/>
</dbReference>
<dbReference type="Proteomes" id="UP000694570">
    <property type="component" value="Unplaced"/>
</dbReference>
<dbReference type="Proteomes" id="UP000694571">
    <property type="component" value="Unplaced"/>
</dbReference>
<dbReference type="Proteomes" id="UP000694720">
    <property type="component" value="Unplaced"/>
</dbReference>
<dbReference type="Proteomes" id="UP000694722">
    <property type="component" value="Unplaced"/>
</dbReference>
<dbReference type="Proteomes" id="UP000694723">
    <property type="component" value="Unplaced"/>
</dbReference>
<dbReference type="Proteomes" id="UP000694724">
    <property type="component" value="Unplaced"/>
</dbReference>
<dbReference type="Proteomes" id="UP000694725">
    <property type="component" value="Unplaced"/>
</dbReference>
<dbReference type="Proteomes" id="UP000694726">
    <property type="component" value="Unplaced"/>
</dbReference>
<dbReference type="Proteomes" id="UP000694727">
    <property type="component" value="Unplaced"/>
</dbReference>
<dbReference type="Proteomes" id="UP000694728">
    <property type="component" value="Unplaced"/>
</dbReference>
<dbReference type="Bgee" id="ENSSSCG00000009759">
    <property type="expression patterns" value="Expressed in ovary and 45 other cell types or tissues"/>
</dbReference>
<dbReference type="ExpressionAtlas" id="Q8SQC1">
    <property type="expression patterns" value="baseline and differential"/>
</dbReference>
<dbReference type="GO" id="GO:0016324">
    <property type="term" value="C:apical plasma membrane"/>
    <property type="evidence" value="ECO:0000314"/>
    <property type="project" value="AgBase"/>
</dbReference>
<dbReference type="GO" id="GO:0016323">
    <property type="term" value="C:basolateral plasma membrane"/>
    <property type="evidence" value="ECO:0000314"/>
    <property type="project" value="AgBase"/>
</dbReference>
<dbReference type="GO" id="GO:0005901">
    <property type="term" value="C:caveola"/>
    <property type="evidence" value="ECO:0000314"/>
    <property type="project" value="AgBase"/>
</dbReference>
<dbReference type="GO" id="GO:0009986">
    <property type="term" value="C:cell surface"/>
    <property type="evidence" value="ECO:0000318"/>
    <property type="project" value="GO_Central"/>
</dbReference>
<dbReference type="GO" id="GO:0005886">
    <property type="term" value="C:plasma membrane"/>
    <property type="evidence" value="ECO:0000314"/>
    <property type="project" value="AgBase"/>
</dbReference>
<dbReference type="GO" id="GO:0070506">
    <property type="term" value="F:high-density lipoprotein particle receptor activity"/>
    <property type="evidence" value="ECO:0000315"/>
    <property type="project" value="AgBase"/>
</dbReference>
<dbReference type="GO" id="GO:0008289">
    <property type="term" value="F:lipid binding"/>
    <property type="evidence" value="ECO:0000318"/>
    <property type="project" value="GO_Central"/>
</dbReference>
<dbReference type="GO" id="GO:0030169">
    <property type="term" value="F:low-density lipoprotein particle binding"/>
    <property type="evidence" value="ECO:0000318"/>
    <property type="project" value="GO_Central"/>
</dbReference>
<dbReference type="GO" id="GO:0005044">
    <property type="term" value="F:scavenger receptor activity"/>
    <property type="evidence" value="ECO:0000318"/>
    <property type="project" value="GO_Central"/>
</dbReference>
<dbReference type="GO" id="GO:0033344">
    <property type="term" value="P:cholesterol efflux"/>
    <property type="evidence" value="ECO:0000318"/>
    <property type="project" value="GO_Central"/>
</dbReference>
<dbReference type="GO" id="GO:0070508">
    <property type="term" value="P:cholesterol import"/>
    <property type="evidence" value="ECO:0000318"/>
    <property type="project" value="GO_Central"/>
</dbReference>
<dbReference type="GO" id="GO:0034381">
    <property type="term" value="P:plasma lipoprotein particle clearance"/>
    <property type="evidence" value="ECO:0000318"/>
    <property type="project" value="GO_Central"/>
</dbReference>
<dbReference type="GO" id="GO:0043654">
    <property type="term" value="P:recognition of apoptotic cell"/>
    <property type="evidence" value="ECO:0000318"/>
    <property type="project" value="GO_Central"/>
</dbReference>
<dbReference type="GO" id="GO:0045056">
    <property type="term" value="P:transcytosis"/>
    <property type="evidence" value="ECO:0000315"/>
    <property type="project" value="AgBase"/>
</dbReference>
<dbReference type="InterPro" id="IPR005428">
    <property type="entry name" value="CD36/SCARB1/SNMP1"/>
</dbReference>
<dbReference type="InterPro" id="IPR002159">
    <property type="entry name" value="CD36_fam"/>
</dbReference>
<dbReference type="PANTHER" id="PTHR11923:SF110">
    <property type="entry name" value="SCAVENGER RECEPTOR CLASS B MEMBER 1"/>
    <property type="match status" value="1"/>
</dbReference>
<dbReference type="PANTHER" id="PTHR11923">
    <property type="entry name" value="SCAVENGER RECEPTOR CLASS B TYPE-1 SR-B1"/>
    <property type="match status" value="1"/>
</dbReference>
<dbReference type="Pfam" id="PF01130">
    <property type="entry name" value="CD36"/>
    <property type="match status" value="1"/>
</dbReference>
<dbReference type="PRINTS" id="PR01610">
    <property type="entry name" value="CD36ANTIGEN"/>
</dbReference>
<dbReference type="PRINTS" id="PR01609">
    <property type="entry name" value="CD36FAMILY"/>
</dbReference>
<feature type="chain" id="PRO_0000144162" description="Scavenger receptor class B member 1">
    <location>
        <begin position="1"/>
        <end position="509"/>
    </location>
</feature>
<feature type="topological domain" description="Cytoplasmic" evidence="4">
    <location>
        <begin position="1"/>
        <end position="11"/>
    </location>
</feature>
<feature type="transmembrane region" description="Helical" evidence="4">
    <location>
        <begin position="12"/>
        <end position="32"/>
    </location>
</feature>
<feature type="topological domain" description="Extracellular" evidence="4">
    <location>
        <begin position="33"/>
        <end position="439"/>
    </location>
</feature>
<feature type="transmembrane region" description="Helical" evidence="4">
    <location>
        <begin position="440"/>
        <end position="460"/>
    </location>
</feature>
<feature type="topological domain" description="Cytoplasmic" evidence="4">
    <location>
        <begin position="461"/>
        <end position="509"/>
    </location>
</feature>
<feature type="glycosylation site" description="N-linked (GlcNAc...) asparagine" evidence="4">
    <location>
        <position position="102"/>
    </location>
</feature>
<feature type="glycosylation site" description="N-linked (GlcNAc...) asparagine" evidence="4">
    <location>
        <position position="108"/>
    </location>
</feature>
<feature type="glycosylation site" description="N-linked (GlcNAc...) asparagine" evidence="4">
    <location>
        <position position="173"/>
    </location>
</feature>
<feature type="glycosylation site" description="N-linked (GlcNAc...) asparagine" evidence="4">
    <location>
        <position position="212"/>
    </location>
</feature>
<feature type="glycosylation site" description="N-linked (GlcNAc...) asparagine" evidence="4">
    <location>
        <position position="255"/>
    </location>
</feature>
<feature type="glycosylation site" description="N-linked (GlcNAc...) asparagine" evidence="4">
    <location>
        <position position="310"/>
    </location>
</feature>
<feature type="glycosylation site" description="N-linked (GlcNAc...) asparagine" evidence="4">
    <location>
        <position position="330"/>
    </location>
</feature>
<feature type="glycosylation site" description="N-linked (GlcNAc...) asparagine" evidence="4">
    <location>
        <position position="383"/>
    </location>
</feature>
<feature type="disulfide bond" evidence="1">
    <location>
        <begin position="251"/>
        <end position="384"/>
    </location>
</feature>
<reference key="1">
    <citation type="submission" date="2002-01" db="EMBL/GenBank/DDBJ databases">
        <title>Characterization of porcine high density lipoprotein (HDL) receptor SR-BI.</title>
        <authorList>
            <person name="Kim J.G."/>
            <person name="Vallet J.L."/>
            <person name="Christenson R.K."/>
        </authorList>
    </citation>
    <scope>NUCLEOTIDE SEQUENCE [MRNA]</scope>
</reference>
<sequence>MGSRSRARQVAAALGFVGLLLAALGAVMIVMVPSIIKQQVLKNVRIDPSSLSFNMWKEIPVPFYLSVYFFDVINPNEILQGQKPQVRERGPYVYREFRHKSNITFNDNDTVSFLEYRSYQFQPHKSRGLESDYIVIPNILVLSASVMMEDRPMSLKLIMTFAFSALGERAFVNRTVGEIMWGYEDPLIHLINKYFPNMFPFKGKFGLFAELNNSDSGLFTVFTGVKDFSRIHLVDKWNGLSKVNFWHSDQCNMINGTSGQMWAPFMTPESSLEFYSPEACRSMKLIYKEQGVFEGIPTFRFVAPNTLFANGSVYPPNEGFCPCMESGIQNVSTCRFNAPLFLSHPHFYNADPVLAEAVSGLHPNTEEHSLFLDIHPVTGIPMNCSVKLQLSLYIKSVKGIGQTGKIEPVVLPLLWFAESGAMEGETLQTFYTQLVLMPKVLHYAQYVLLALGCVLLFIPIVYQIRSQEKCYLFWSSSKKGSKDKEAIQAYSESLMTPAPKGTVLQEARL</sequence>
<gene>
    <name type="primary">SCARB1</name>
</gene>
<comment type="function">
    <text evidence="3">Receptor for different ligands such as phospholipids, cholesterol ester, lipoproteins, phosphatidylserine and apoptotic cells. Receptor for HDL, mediating selective uptake of cholesteryl ether and HDL-dependent cholesterol efflux. Also facilitates the flux of free and esterified cholesterol between the cell surface and apoB-containing lipoproteins and modified lipoproteins, although less efficiently than HDL. May be involved in the phagocytosis of apoptotic cells, via its phosphatidylserine binding activity.</text>
</comment>
<comment type="subunit">
    <text evidence="1">The C-terminal region binds to PDZK1.</text>
</comment>
<comment type="subcellular location">
    <subcellularLocation>
        <location evidence="3">Cell membrane</location>
        <topology evidence="1">Multi-pass membrane protein</topology>
    </subcellularLocation>
    <subcellularLocation>
        <location evidence="2">Membrane</location>
        <location evidence="2">Caveola</location>
        <topology evidence="1">Multi-pass membrane protein</topology>
    </subcellularLocation>
    <text evidence="1">Predominantly localized to cholesterol and sphingomyelin-enriched domains within the plasma membrane, called caveolae.</text>
</comment>
<comment type="PTM">
    <text evidence="1">N-glycosylated.</text>
</comment>
<comment type="PTM">
    <text evidence="1">The six cysteines of the extracellular domain are all involved in intramolecular disulfide bonds.</text>
</comment>
<comment type="similarity">
    <text evidence="5">Belongs to the CD36 family.</text>
</comment>